<feature type="transit peptide" description="Chloroplast" evidence="1">
    <location>
        <begin position="1"/>
        <end position="36"/>
    </location>
</feature>
<feature type="transit peptide" description="Thylakoid" evidence="3 4">
    <location>
        <begin position="37"/>
        <end position="92"/>
    </location>
</feature>
<feature type="chain" id="PRO_0000342095" description="Peptidyl-prolyl cis-trans isomerase CYP38, chloroplastic">
    <location>
        <begin position="93"/>
        <end position="437"/>
    </location>
</feature>
<feature type="domain" description="PPIase cyclophilin-type" evidence="2">
    <location>
        <begin position="245"/>
        <end position="437"/>
    </location>
</feature>
<feature type="splice variant" id="VSP_055391" description="In isoform 2." evidence="10">
    <original>EELGLYKAQVVIPFNAFG</original>
    <variation>EVSLSKSLLVRDLYYIVF</variation>
    <location>
        <begin position="338"/>
        <end position="355"/>
    </location>
</feature>
<feature type="splice variant" id="VSP_055392" description="In isoform 2." evidence="10">
    <location>
        <begin position="356"/>
        <end position="437"/>
    </location>
</feature>
<feature type="strand" evidence="11">
    <location>
        <begin position="93"/>
        <end position="97"/>
    </location>
</feature>
<feature type="helix" evidence="11">
    <location>
        <begin position="103"/>
        <end position="110"/>
    </location>
</feature>
<feature type="helix" evidence="11">
    <location>
        <begin position="116"/>
        <end position="126"/>
    </location>
</feature>
<feature type="helix" evidence="11">
    <location>
        <begin position="128"/>
        <end position="131"/>
    </location>
</feature>
<feature type="turn" evidence="11">
    <location>
        <begin position="137"/>
        <end position="139"/>
    </location>
</feature>
<feature type="helix" evidence="11">
    <location>
        <begin position="140"/>
        <end position="154"/>
    </location>
</feature>
<feature type="helix" evidence="11">
    <location>
        <begin position="157"/>
        <end position="161"/>
    </location>
</feature>
<feature type="turn" evidence="11">
    <location>
        <begin position="162"/>
        <end position="164"/>
    </location>
</feature>
<feature type="helix" evidence="11">
    <location>
        <begin position="167"/>
        <end position="169"/>
    </location>
</feature>
<feature type="helix" evidence="11">
    <location>
        <begin position="170"/>
        <end position="188"/>
    </location>
</feature>
<feature type="strand" evidence="11">
    <location>
        <begin position="197"/>
        <end position="199"/>
    </location>
</feature>
<feature type="helix" evidence="11">
    <location>
        <begin position="200"/>
        <end position="202"/>
    </location>
</feature>
<feature type="helix" evidence="11">
    <location>
        <begin position="203"/>
        <end position="216"/>
    </location>
</feature>
<feature type="strand" evidence="11">
    <location>
        <begin position="237"/>
        <end position="246"/>
    </location>
</feature>
<feature type="strand" evidence="11">
    <location>
        <begin position="254"/>
        <end position="263"/>
    </location>
</feature>
<feature type="turn" evidence="11">
    <location>
        <begin position="264"/>
        <end position="266"/>
    </location>
</feature>
<feature type="helix" evidence="11">
    <location>
        <begin position="268"/>
        <end position="279"/>
    </location>
</feature>
<feature type="turn" evidence="11">
    <location>
        <begin position="280"/>
        <end position="285"/>
    </location>
</feature>
<feature type="strand" evidence="11">
    <location>
        <begin position="289"/>
        <end position="296"/>
    </location>
</feature>
<feature type="strand" evidence="11">
    <location>
        <begin position="318"/>
        <end position="323"/>
    </location>
</feature>
<feature type="strand" evidence="11">
    <location>
        <begin position="325"/>
        <end position="328"/>
    </location>
</feature>
<feature type="helix" evidence="11">
    <location>
        <begin position="338"/>
        <end position="340"/>
    </location>
</feature>
<feature type="strand" evidence="11">
    <location>
        <begin position="342"/>
        <end position="349"/>
    </location>
</feature>
<feature type="strand" evidence="11">
    <location>
        <begin position="378"/>
        <end position="382"/>
    </location>
</feature>
<feature type="strand" evidence="11">
    <location>
        <begin position="388"/>
        <end position="390"/>
    </location>
</feature>
<feature type="strand" evidence="11">
    <location>
        <begin position="394"/>
        <end position="403"/>
    </location>
</feature>
<feature type="helix" evidence="11">
    <location>
        <begin position="406"/>
        <end position="409"/>
    </location>
</feature>
<feature type="strand" evidence="11">
    <location>
        <begin position="415"/>
        <end position="423"/>
    </location>
</feature>
<feature type="helix" evidence="11">
    <location>
        <begin position="425"/>
        <end position="427"/>
    </location>
</feature>
<feature type="strand" evidence="11">
    <location>
        <begin position="428"/>
        <end position="430"/>
    </location>
</feature>
<gene>
    <name type="primary">CYP38</name>
    <name type="ordered locus">At3g01480</name>
    <name type="ORF">F4P13.3</name>
</gene>
<reference key="1">
    <citation type="journal article" date="2004" name="Plant Physiol.">
        <title>The Arabidopsis cyclophilin gene family.</title>
        <authorList>
            <person name="Romano P.G.N."/>
            <person name="Horton P."/>
            <person name="Gray J.E."/>
        </authorList>
    </citation>
    <scope>NUCLEOTIDE SEQUENCE [MRNA] (ISOFORM 1)</scope>
    <scope>TISSUE SPECIFICITY</scope>
    <scope>GENE FAMILY</scope>
    <scope>NOMENCLATURE</scope>
</reference>
<reference key="2">
    <citation type="journal article" date="2000" name="Nature">
        <title>Sequence and analysis of chromosome 3 of the plant Arabidopsis thaliana.</title>
        <authorList>
            <person name="Salanoubat M."/>
            <person name="Lemcke K."/>
            <person name="Rieger M."/>
            <person name="Ansorge W."/>
            <person name="Unseld M."/>
            <person name="Fartmann B."/>
            <person name="Valle G."/>
            <person name="Bloecker H."/>
            <person name="Perez-Alonso M."/>
            <person name="Obermaier B."/>
            <person name="Delseny M."/>
            <person name="Boutry M."/>
            <person name="Grivell L.A."/>
            <person name="Mache R."/>
            <person name="Puigdomenech P."/>
            <person name="De Simone V."/>
            <person name="Choisne N."/>
            <person name="Artiguenave F."/>
            <person name="Robert C."/>
            <person name="Brottier P."/>
            <person name="Wincker P."/>
            <person name="Cattolico L."/>
            <person name="Weissenbach J."/>
            <person name="Saurin W."/>
            <person name="Quetier F."/>
            <person name="Schaefer M."/>
            <person name="Mueller-Auer S."/>
            <person name="Gabel C."/>
            <person name="Fuchs M."/>
            <person name="Benes V."/>
            <person name="Wurmbach E."/>
            <person name="Drzonek H."/>
            <person name="Erfle H."/>
            <person name="Jordan N."/>
            <person name="Bangert S."/>
            <person name="Wiedelmann R."/>
            <person name="Kranz H."/>
            <person name="Voss H."/>
            <person name="Holland R."/>
            <person name="Brandt P."/>
            <person name="Nyakatura G."/>
            <person name="Vezzi A."/>
            <person name="D'Angelo M."/>
            <person name="Pallavicini A."/>
            <person name="Toppo S."/>
            <person name="Simionati B."/>
            <person name="Conrad A."/>
            <person name="Hornischer K."/>
            <person name="Kauer G."/>
            <person name="Loehnert T.-H."/>
            <person name="Nordsiek G."/>
            <person name="Reichelt J."/>
            <person name="Scharfe M."/>
            <person name="Schoen O."/>
            <person name="Bargues M."/>
            <person name="Terol J."/>
            <person name="Climent J."/>
            <person name="Navarro P."/>
            <person name="Collado C."/>
            <person name="Perez-Perez A."/>
            <person name="Ottenwaelder B."/>
            <person name="Duchemin D."/>
            <person name="Cooke R."/>
            <person name="Laudie M."/>
            <person name="Berger-Llauro C."/>
            <person name="Purnelle B."/>
            <person name="Masuy D."/>
            <person name="de Haan M."/>
            <person name="Maarse A.C."/>
            <person name="Alcaraz J.-P."/>
            <person name="Cottet A."/>
            <person name="Casacuberta E."/>
            <person name="Monfort A."/>
            <person name="Argiriou A."/>
            <person name="Flores M."/>
            <person name="Liguori R."/>
            <person name="Vitale D."/>
            <person name="Mannhaupt G."/>
            <person name="Haase D."/>
            <person name="Schoof H."/>
            <person name="Rudd S."/>
            <person name="Zaccaria P."/>
            <person name="Mewes H.-W."/>
            <person name="Mayer K.F.X."/>
            <person name="Kaul S."/>
            <person name="Town C.D."/>
            <person name="Koo H.L."/>
            <person name="Tallon L.J."/>
            <person name="Jenkins J."/>
            <person name="Rooney T."/>
            <person name="Rizzo M."/>
            <person name="Walts A."/>
            <person name="Utterback T."/>
            <person name="Fujii C.Y."/>
            <person name="Shea T.P."/>
            <person name="Creasy T.H."/>
            <person name="Haas B."/>
            <person name="Maiti R."/>
            <person name="Wu D."/>
            <person name="Peterson J."/>
            <person name="Van Aken S."/>
            <person name="Pai G."/>
            <person name="Militscher J."/>
            <person name="Sellers P."/>
            <person name="Gill J.E."/>
            <person name="Feldblyum T.V."/>
            <person name="Preuss D."/>
            <person name="Lin X."/>
            <person name="Nierman W.C."/>
            <person name="Salzberg S.L."/>
            <person name="White O."/>
            <person name="Venter J.C."/>
            <person name="Fraser C.M."/>
            <person name="Kaneko T."/>
            <person name="Nakamura Y."/>
            <person name="Sato S."/>
            <person name="Kato T."/>
            <person name="Asamizu E."/>
            <person name="Sasamoto S."/>
            <person name="Kimura T."/>
            <person name="Idesawa K."/>
            <person name="Kawashima K."/>
            <person name="Kishida Y."/>
            <person name="Kiyokawa C."/>
            <person name="Kohara M."/>
            <person name="Matsumoto M."/>
            <person name="Matsuno A."/>
            <person name="Muraki A."/>
            <person name="Nakayama S."/>
            <person name="Nakazaki N."/>
            <person name="Shinpo S."/>
            <person name="Takeuchi C."/>
            <person name="Wada T."/>
            <person name="Watanabe A."/>
            <person name="Yamada M."/>
            <person name="Yasuda M."/>
            <person name="Tabata S."/>
        </authorList>
    </citation>
    <scope>NUCLEOTIDE SEQUENCE [LARGE SCALE GENOMIC DNA]</scope>
    <source>
        <strain>cv. Columbia</strain>
    </source>
</reference>
<reference key="3">
    <citation type="journal article" date="2017" name="Plant J.">
        <title>Araport11: a complete reannotation of the Arabidopsis thaliana reference genome.</title>
        <authorList>
            <person name="Cheng C.Y."/>
            <person name="Krishnakumar V."/>
            <person name="Chan A.P."/>
            <person name="Thibaud-Nissen F."/>
            <person name="Schobel S."/>
            <person name="Town C.D."/>
        </authorList>
    </citation>
    <scope>GENOME REANNOTATION</scope>
    <source>
        <strain>cv. Columbia</strain>
    </source>
</reference>
<reference key="4">
    <citation type="journal article" date="2003" name="Science">
        <title>Empirical analysis of transcriptional activity in the Arabidopsis genome.</title>
        <authorList>
            <person name="Yamada K."/>
            <person name="Lim J."/>
            <person name="Dale J.M."/>
            <person name="Chen H."/>
            <person name="Shinn P."/>
            <person name="Palm C.J."/>
            <person name="Southwick A.M."/>
            <person name="Wu H.C."/>
            <person name="Kim C.J."/>
            <person name="Nguyen M."/>
            <person name="Pham P.K."/>
            <person name="Cheuk R.F."/>
            <person name="Karlin-Newmann G."/>
            <person name="Liu S.X."/>
            <person name="Lam B."/>
            <person name="Sakano H."/>
            <person name="Wu T."/>
            <person name="Yu G."/>
            <person name="Miranda M."/>
            <person name="Quach H.L."/>
            <person name="Tripp M."/>
            <person name="Chang C.H."/>
            <person name="Lee J.M."/>
            <person name="Toriumi M.J."/>
            <person name="Chan M.M."/>
            <person name="Tang C.C."/>
            <person name="Onodera C.S."/>
            <person name="Deng J.M."/>
            <person name="Akiyama K."/>
            <person name="Ansari Y."/>
            <person name="Arakawa T."/>
            <person name="Banh J."/>
            <person name="Banno F."/>
            <person name="Bowser L."/>
            <person name="Brooks S.Y."/>
            <person name="Carninci P."/>
            <person name="Chao Q."/>
            <person name="Choy N."/>
            <person name="Enju A."/>
            <person name="Goldsmith A.D."/>
            <person name="Gurjal M."/>
            <person name="Hansen N.F."/>
            <person name="Hayashizaki Y."/>
            <person name="Johnson-Hopson C."/>
            <person name="Hsuan V.W."/>
            <person name="Iida K."/>
            <person name="Karnes M."/>
            <person name="Khan S."/>
            <person name="Koesema E."/>
            <person name="Ishida J."/>
            <person name="Jiang P.X."/>
            <person name="Jones T."/>
            <person name="Kawai J."/>
            <person name="Kamiya A."/>
            <person name="Meyers C."/>
            <person name="Nakajima M."/>
            <person name="Narusaka M."/>
            <person name="Seki M."/>
            <person name="Sakurai T."/>
            <person name="Satou M."/>
            <person name="Tamse R."/>
            <person name="Vaysberg M."/>
            <person name="Wallender E.K."/>
            <person name="Wong C."/>
            <person name="Yamamura Y."/>
            <person name="Yuan S."/>
            <person name="Shinozaki K."/>
            <person name="Davis R.W."/>
            <person name="Theologis A."/>
            <person name="Ecker J.R."/>
        </authorList>
    </citation>
    <scope>NUCLEOTIDE SEQUENCE [LARGE SCALE MRNA] (ISOFORM 1)</scope>
    <source>
        <strain>cv. Columbia</strain>
    </source>
</reference>
<reference key="5">
    <citation type="submission" date="2002-03" db="EMBL/GenBank/DDBJ databases">
        <title>Full-length cDNA from Arabidopsis thaliana.</title>
        <authorList>
            <person name="Brover V.V."/>
            <person name="Troukhan M.E."/>
            <person name="Alexandrov N.A."/>
            <person name="Lu Y.-P."/>
            <person name="Flavell R.B."/>
            <person name="Feldmann K.A."/>
        </authorList>
    </citation>
    <scope>NUCLEOTIDE SEQUENCE [LARGE SCALE MRNA] (ISOFORM 1)</scope>
</reference>
<reference key="6">
    <citation type="journal article" date="2002" name="J. Biol. Chem.">
        <title>Proteome map of the chloroplast lumen of Arabidopsis thaliana.</title>
        <authorList>
            <person name="Schubert M."/>
            <person name="Petersson U.A."/>
            <person name="Haas B.J."/>
            <person name="Funk C."/>
            <person name="Schroeder W.P."/>
            <person name="Kieselbach T."/>
        </authorList>
    </citation>
    <scope>PROTEIN SEQUENCE OF 93-114</scope>
    <scope>SUBCELLULAR LOCATION</scope>
</reference>
<reference key="7">
    <citation type="journal article" date="2009" name="DNA Res.">
        <title>Analysis of multiple occurrences of alternative splicing events in Arabidopsis thaliana using novel sequenced full-length cDNAs.</title>
        <authorList>
            <person name="Iida K."/>
            <person name="Fukami-Kobayashi K."/>
            <person name="Toyoda A."/>
            <person name="Sakaki Y."/>
            <person name="Kobayashi M."/>
            <person name="Seki M."/>
            <person name="Shinozaki K."/>
        </authorList>
    </citation>
    <scope>NUCLEOTIDE SEQUENCE [LARGE SCALE MRNA] OF 63-437 (ISOFORM 1)</scope>
    <source>
        <strain>cv. Columbia</strain>
    </source>
</reference>
<reference key="8">
    <citation type="journal article" date="2002" name="Plant Cell">
        <title>Central functions of the lumenal and peripheral thylakoid proteome of Arabidopsis determined by experimentation and genome-wide prediction.</title>
        <authorList>
            <person name="Peltier J.-B."/>
            <person name="Emanuelsson O."/>
            <person name="Kalume D.E."/>
            <person name="Ytterberg J."/>
            <person name="Friso G."/>
            <person name="Rudella A."/>
            <person name="Liberles D.A."/>
            <person name="Soederberg L."/>
            <person name="Roepstorff P."/>
            <person name="von Heijne G."/>
            <person name="van Wijk K.J."/>
        </authorList>
    </citation>
    <scope>PROTEIN SEQUENCE OF N-TERMINUS</scope>
    <scope>SUBCELLULAR LOCATION</scope>
    <scope>IDENTIFICATION BY MASS SPECTROMETRY</scope>
</reference>
<reference key="9">
    <citation type="journal article" date="2004" name="Plant Physiol.">
        <title>Immunophilins and parvulins. Superfamily of peptidyl prolyl isomerases in Arabidopsis.</title>
        <authorList>
            <person name="He Z."/>
            <person name="Li L."/>
            <person name="Luan S."/>
        </authorList>
    </citation>
    <scope>TISSUE SPECIFICITY</scope>
    <scope>GENE FAMILY</scope>
    <scope>NOMENCLATURE</scope>
    <scope>INDUCTION</scope>
</reference>
<reference key="10">
    <citation type="journal article" date="2007" name="Proc. Natl. Acad. Sci. U.S.A.">
        <title>A chloroplast cyclophilin functions in the assembly and maintenance of photosystem II in Arabidopsis thaliana.</title>
        <authorList>
            <person name="Fu A."/>
            <person name="He Z."/>
            <person name="Cho H.S."/>
            <person name="Lima A."/>
            <person name="Buchanan B.B."/>
            <person name="Luan S."/>
        </authorList>
    </citation>
    <scope>FUNCTION</scope>
    <scope>DISRUPTION PHENOTYPE</scope>
</reference>
<reference key="11">
    <citation type="journal article" date="2008" name="PLoS ONE">
        <title>Sorting signals, N-terminal modifications and abundance of the chloroplast proteome.</title>
        <authorList>
            <person name="Zybailov B."/>
            <person name="Rutschow H."/>
            <person name="Friso G."/>
            <person name="Rudella A."/>
            <person name="Emanuelsson O."/>
            <person name="Sun Q."/>
            <person name="van Wijk K.J."/>
        </authorList>
    </citation>
    <scope>IDENTIFICATION BY MASS SPECTROMETRY</scope>
    <scope>SUBCELLULAR LOCATION [LARGE SCALE ANALYSIS]</scope>
</reference>
<reference key="12">
    <citation type="journal article" date="2012" name="Plant Cell">
        <title>Crystal structure of Arabidopsis cyclophilin38 reveals a previously uncharacterized immunophilin fold and a possible autoinhibitory mechanism.</title>
        <authorList>
            <person name="Vasudevan D."/>
            <person name="Fu A."/>
            <person name="Luan S."/>
            <person name="Swaminathan K."/>
        </authorList>
    </citation>
    <scope>X-RAY CRYSTALLOGRAPHY (2.39 ANGSTROMS) OF 83-437</scope>
    <scope>FUNCTION</scope>
    <scope>DOMAIN</scope>
</reference>
<proteinExistence type="evidence at protein level"/>
<comment type="function">
    <text evidence="7 9">Required for the assembly and stabilization of PSII, but has no PPIases activity.</text>
</comment>
<comment type="catalytic activity">
    <reaction>
        <text>[protein]-peptidylproline (omega=180) = [protein]-peptidylproline (omega=0)</text>
        <dbReference type="Rhea" id="RHEA:16237"/>
        <dbReference type="Rhea" id="RHEA-COMP:10747"/>
        <dbReference type="Rhea" id="RHEA-COMP:10748"/>
        <dbReference type="ChEBI" id="CHEBI:83833"/>
        <dbReference type="ChEBI" id="CHEBI:83834"/>
        <dbReference type="EC" id="5.2.1.8"/>
    </reaction>
</comment>
<comment type="subcellular location">
    <subcellularLocation>
        <location evidence="3 4 8">Plastid</location>
        <location evidence="3 4 8">Chloroplast thylakoid lumen</location>
    </subcellularLocation>
</comment>
<comment type="alternative products">
    <event type="alternative splicing"/>
    <isoform>
        <id>Q9SSA5-1</id>
        <name>1</name>
        <sequence type="displayed"/>
    </isoform>
    <isoform>
        <id>Q9SSA5-2</id>
        <name>2</name>
        <sequence type="described" ref="VSP_055391 VSP_055392"/>
    </isoform>
</comment>
<comment type="tissue specificity">
    <text evidence="5 6">Ubiquitous. Lower levels of expression in roots.</text>
</comment>
<comment type="induction">
    <text evidence="5">Up-regulated by light. Down-regulated by dark.</text>
</comment>
<comment type="domain">
    <text evidence="9">The N-terminal helical domain blocks the interaction with the potential target PSII subunit chlorophyll protein 47 (CP47).</text>
</comment>
<comment type="disruption phenotype">
    <text evidence="7">Stunted growth and hypersensitivity to high light.</text>
</comment>
<accession>Q9SSA5</accession>
<accession>B3H5B8</accession>
<accession>B9DHS6</accession>
<sequence length="437" mass="47982">MAAAFASLPTFSVVNSSRFPRRRIGFSCSKKPLEVRCSSGNTRYTKQRGAFTSLKECAISLALSVGLMVSVPSIALPPNAHAVANPVIPDVSVLISGPPIKDPEALLRYALPIDNKAIREVQKPLEDITDSLKIAGVKALDSVERNVRQASRTLQQGKSIIVAGFAESKKDHGNEMIEKLEAGMQDMLKIVEDRKRDAVAPKQKEILKYVGGIEEDMVDGFPYEVPEEYRNMPLLKGRASVDMKVKIKDNPNIEDCVFRIVLDGYNAPVTAGNFVDLVERHFYDGMEIQRSDGFVVQTGDPEGPAEGFIDPSTEKTRTVPLEIMVTGEKTPFYGSTLEELGLYKAQVVIPFNAFGTMAMAREEFENDSGSSQVFWLLKESELTPSNSNILDGRYAVFGYVTDNEDFLADLKVGDVIESIQVVSGLENLANPSYKIAG</sequence>
<name>CYP38_ARATH</name>
<protein>
    <recommendedName>
        <fullName>Peptidyl-prolyl cis-trans isomerase CYP38, chloroplastic</fullName>
        <shortName>PPIase CYP38</shortName>
        <ecNumber>5.2.1.8</ecNumber>
    </recommendedName>
    <alternativeName>
        <fullName>Rotamase CYP38</fullName>
    </alternativeName>
    <alternativeName>
        <fullName>Thylakoid lumen PPIase</fullName>
    </alternativeName>
</protein>
<keyword id="KW-0002">3D-structure</keyword>
<keyword id="KW-0025">Alternative splicing</keyword>
<keyword id="KW-0150">Chloroplast</keyword>
<keyword id="KW-0903">Direct protein sequencing</keyword>
<keyword id="KW-0413">Isomerase</keyword>
<keyword id="KW-0934">Plastid</keyword>
<keyword id="KW-1185">Reference proteome</keyword>
<keyword id="KW-0697">Rotamase</keyword>
<keyword id="KW-0793">Thylakoid</keyword>
<keyword id="KW-0809">Transit peptide</keyword>
<evidence type="ECO:0000255" key="1"/>
<evidence type="ECO:0000255" key="2">
    <source>
        <dbReference type="PROSITE-ProRule" id="PRU00156"/>
    </source>
</evidence>
<evidence type="ECO:0000269" key="3">
    <source>
    </source>
</evidence>
<evidence type="ECO:0000269" key="4">
    <source>
    </source>
</evidence>
<evidence type="ECO:0000269" key="5">
    <source>
    </source>
</evidence>
<evidence type="ECO:0000269" key="6">
    <source>
    </source>
</evidence>
<evidence type="ECO:0000269" key="7">
    <source>
    </source>
</evidence>
<evidence type="ECO:0000269" key="8">
    <source>
    </source>
</evidence>
<evidence type="ECO:0000269" key="9">
    <source>
    </source>
</evidence>
<evidence type="ECO:0000305" key="10"/>
<evidence type="ECO:0007829" key="11">
    <source>
        <dbReference type="PDB" id="3RFY"/>
    </source>
</evidence>
<organism>
    <name type="scientific">Arabidopsis thaliana</name>
    <name type="common">Mouse-ear cress</name>
    <dbReference type="NCBI Taxonomy" id="3702"/>
    <lineage>
        <taxon>Eukaryota</taxon>
        <taxon>Viridiplantae</taxon>
        <taxon>Streptophyta</taxon>
        <taxon>Embryophyta</taxon>
        <taxon>Tracheophyta</taxon>
        <taxon>Spermatophyta</taxon>
        <taxon>Magnoliopsida</taxon>
        <taxon>eudicotyledons</taxon>
        <taxon>Gunneridae</taxon>
        <taxon>Pentapetalae</taxon>
        <taxon>rosids</taxon>
        <taxon>malvids</taxon>
        <taxon>Brassicales</taxon>
        <taxon>Brassicaceae</taxon>
        <taxon>Camelineae</taxon>
        <taxon>Arabidopsis</taxon>
    </lineage>
</organism>
<dbReference type="EC" id="5.2.1.8"/>
<dbReference type="EMBL" id="AY568524">
    <property type="protein sequence ID" value="AAS75307.1"/>
    <property type="molecule type" value="mRNA"/>
</dbReference>
<dbReference type="EMBL" id="AC009325">
    <property type="protein sequence ID" value="AAF01533.1"/>
    <property type="molecule type" value="Genomic_DNA"/>
</dbReference>
<dbReference type="EMBL" id="CP002686">
    <property type="protein sequence ID" value="AEE73672.1"/>
    <property type="molecule type" value="Genomic_DNA"/>
</dbReference>
<dbReference type="EMBL" id="CP002686">
    <property type="protein sequence ID" value="AEE73673.1"/>
    <property type="molecule type" value="Genomic_DNA"/>
</dbReference>
<dbReference type="EMBL" id="AY039843">
    <property type="protein sequence ID" value="AAK63947.1"/>
    <property type="molecule type" value="mRNA"/>
</dbReference>
<dbReference type="EMBL" id="AY113168">
    <property type="protein sequence ID" value="AAM47471.1"/>
    <property type="molecule type" value="mRNA"/>
</dbReference>
<dbReference type="EMBL" id="AY087781">
    <property type="protein sequence ID" value="AAM65317.1"/>
    <property type="molecule type" value="mRNA"/>
</dbReference>
<dbReference type="EMBL" id="AK317631">
    <property type="protein sequence ID" value="BAH20293.1"/>
    <property type="molecule type" value="mRNA"/>
</dbReference>
<dbReference type="RefSeq" id="NP_001118550.1">
    <molecule id="Q9SSA5-2"/>
    <property type="nucleotide sequence ID" value="NM_001125078.1"/>
</dbReference>
<dbReference type="RefSeq" id="NP_186797.1">
    <molecule id="Q9SSA5-1"/>
    <property type="nucleotide sequence ID" value="NM_111014.4"/>
</dbReference>
<dbReference type="PDB" id="3RFY">
    <property type="method" value="X-ray"/>
    <property type="resolution" value="2.39 A"/>
    <property type="chains" value="A=83-437"/>
</dbReference>
<dbReference type="PDBsum" id="3RFY"/>
<dbReference type="SMR" id="Q9SSA5"/>
<dbReference type="FunCoup" id="Q9SSA5">
    <property type="interactions" value="1373"/>
</dbReference>
<dbReference type="IntAct" id="Q9SSA5">
    <property type="interactions" value="1"/>
</dbReference>
<dbReference type="STRING" id="3702.Q9SSA5"/>
<dbReference type="iPTMnet" id="Q9SSA5"/>
<dbReference type="MetOSite" id="Q9SSA5"/>
<dbReference type="PaxDb" id="3702-AT3G01480.1"/>
<dbReference type="ProMEX" id="Q9SSA5"/>
<dbReference type="ProteomicsDB" id="222740">
    <molecule id="Q9SSA5-1"/>
</dbReference>
<dbReference type="EnsemblPlants" id="AT3G01480.1">
    <molecule id="Q9SSA5-1"/>
    <property type="protein sequence ID" value="AT3G01480.1"/>
    <property type="gene ID" value="AT3G01480"/>
</dbReference>
<dbReference type="EnsemblPlants" id="AT3G01480.2">
    <molecule id="Q9SSA5-2"/>
    <property type="protein sequence ID" value="AT3G01480.2"/>
    <property type="gene ID" value="AT3G01480"/>
</dbReference>
<dbReference type="GeneID" id="821137"/>
<dbReference type="Gramene" id="AT3G01480.1">
    <molecule id="Q9SSA5-1"/>
    <property type="protein sequence ID" value="AT3G01480.1"/>
    <property type="gene ID" value="AT3G01480"/>
</dbReference>
<dbReference type="Gramene" id="AT3G01480.2">
    <molecule id="Q9SSA5-2"/>
    <property type="protein sequence ID" value="AT3G01480.2"/>
    <property type="gene ID" value="AT3G01480"/>
</dbReference>
<dbReference type="KEGG" id="ath:AT3G01480"/>
<dbReference type="Araport" id="AT3G01480"/>
<dbReference type="TAIR" id="AT3G01480">
    <property type="gene designation" value="CYP38"/>
</dbReference>
<dbReference type="eggNOG" id="ENOG502QSSP">
    <property type="taxonomic scope" value="Eukaryota"/>
</dbReference>
<dbReference type="HOGENOM" id="CLU_012062_19_2_1"/>
<dbReference type="InParanoid" id="Q9SSA5"/>
<dbReference type="OMA" id="QFFFFLY"/>
<dbReference type="OrthoDB" id="1735926at2759"/>
<dbReference type="PhylomeDB" id="Q9SSA5"/>
<dbReference type="EvolutionaryTrace" id="Q9SSA5"/>
<dbReference type="PRO" id="PR:Q9SSA5"/>
<dbReference type="Proteomes" id="UP000006548">
    <property type="component" value="Chromosome 3"/>
</dbReference>
<dbReference type="ExpressionAtlas" id="Q9SSA5">
    <property type="expression patterns" value="baseline and differential"/>
</dbReference>
<dbReference type="GO" id="GO:0009507">
    <property type="term" value="C:chloroplast"/>
    <property type="evidence" value="ECO:0007005"/>
    <property type="project" value="TAIR"/>
</dbReference>
<dbReference type="GO" id="GO:0009570">
    <property type="term" value="C:chloroplast stroma"/>
    <property type="evidence" value="ECO:0007005"/>
    <property type="project" value="TAIR"/>
</dbReference>
<dbReference type="GO" id="GO:0009534">
    <property type="term" value="C:chloroplast thylakoid"/>
    <property type="evidence" value="ECO:0007005"/>
    <property type="project" value="TAIR"/>
</dbReference>
<dbReference type="GO" id="GO:0009543">
    <property type="term" value="C:chloroplast thylakoid lumen"/>
    <property type="evidence" value="ECO:0007669"/>
    <property type="project" value="UniProtKB-SubCell"/>
</dbReference>
<dbReference type="GO" id="GO:0009535">
    <property type="term" value="C:chloroplast thylakoid membrane"/>
    <property type="evidence" value="ECO:0007005"/>
    <property type="project" value="TAIR"/>
</dbReference>
<dbReference type="GO" id="GO:0005829">
    <property type="term" value="C:cytosol"/>
    <property type="evidence" value="ECO:0007005"/>
    <property type="project" value="TAIR"/>
</dbReference>
<dbReference type="GO" id="GO:0009579">
    <property type="term" value="C:thylakoid"/>
    <property type="evidence" value="ECO:0007005"/>
    <property type="project" value="TAIR"/>
</dbReference>
<dbReference type="GO" id="GO:0031977">
    <property type="term" value="C:thylakoid lumen"/>
    <property type="evidence" value="ECO:0007005"/>
    <property type="project" value="TAIR"/>
</dbReference>
<dbReference type="GO" id="GO:0003755">
    <property type="term" value="F:peptidyl-prolyl cis-trans isomerase activity"/>
    <property type="evidence" value="ECO:0007669"/>
    <property type="project" value="UniProtKB-KW"/>
</dbReference>
<dbReference type="GO" id="GO:0010102">
    <property type="term" value="P:lateral root morphogenesis"/>
    <property type="evidence" value="ECO:0000315"/>
    <property type="project" value="TAIR"/>
</dbReference>
<dbReference type="GO" id="GO:0010207">
    <property type="term" value="P:photosystem II assembly"/>
    <property type="evidence" value="ECO:0000315"/>
    <property type="project" value="TAIR"/>
</dbReference>
<dbReference type="GO" id="GO:0042549">
    <property type="term" value="P:photosystem II stabilization"/>
    <property type="evidence" value="ECO:0000315"/>
    <property type="project" value="TAIR"/>
</dbReference>
<dbReference type="CDD" id="cd01924">
    <property type="entry name" value="cyclophilin_TLP40_like"/>
    <property type="match status" value="1"/>
</dbReference>
<dbReference type="Gene3D" id="2.40.100.10">
    <property type="entry name" value="Cyclophilin-like"/>
    <property type="match status" value="1"/>
</dbReference>
<dbReference type="Gene3D" id="1.20.120.290">
    <property type="entry name" value="Oxygen-evolving enhancer protein 3 (PsbQ), four-helix up-down bundle"/>
    <property type="match status" value="1"/>
</dbReference>
<dbReference type="InterPro" id="IPR029000">
    <property type="entry name" value="Cyclophilin-like_dom_sf"/>
</dbReference>
<dbReference type="InterPro" id="IPR002130">
    <property type="entry name" value="Cyclophilin-type_PPIase_dom"/>
</dbReference>
<dbReference type="InterPro" id="IPR048563">
    <property type="entry name" value="CYP38_PsbQ-like"/>
</dbReference>
<dbReference type="InterPro" id="IPR044665">
    <property type="entry name" value="E_coli_cyclophilin_A-like"/>
</dbReference>
<dbReference type="InterPro" id="IPR023222">
    <property type="entry name" value="PsbQ-like_dom_sf"/>
</dbReference>
<dbReference type="PANTHER" id="PTHR43246">
    <property type="entry name" value="PEPTIDYL-PROLYL CIS-TRANS ISOMERASE CYP38, CHLOROPLASTIC"/>
    <property type="match status" value="1"/>
</dbReference>
<dbReference type="Pfam" id="PF21329">
    <property type="entry name" value="CYP38_PsbQ-like"/>
    <property type="match status" value="1"/>
</dbReference>
<dbReference type="Pfam" id="PF00160">
    <property type="entry name" value="Pro_isomerase"/>
    <property type="match status" value="1"/>
</dbReference>
<dbReference type="SUPFAM" id="SSF50891">
    <property type="entry name" value="Cyclophilin-like"/>
    <property type="match status" value="1"/>
</dbReference>
<dbReference type="SUPFAM" id="SSF101112">
    <property type="entry name" value="Oxygen-evolving enhancer protein 3"/>
    <property type="match status" value="1"/>
</dbReference>
<dbReference type="PROSITE" id="PS50072">
    <property type="entry name" value="CSA_PPIASE_2"/>
    <property type="match status" value="1"/>
</dbReference>